<keyword id="KW-0030">Aminoacyl-tRNA synthetase</keyword>
<keyword id="KW-0067">ATP-binding</keyword>
<keyword id="KW-0963">Cytoplasm</keyword>
<keyword id="KW-0436">Ligase</keyword>
<keyword id="KW-0479">Metal-binding</keyword>
<keyword id="KW-0547">Nucleotide-binding</keyword>
<keyword id="KW-0648">Protein biosynthesis</keyword>
<keyword id="KW-0694">RNA-binding</keyword>
<keyword id="KW-0820">tRNA-binding</keyword>
<keyword id="KW-0862">Zinc</keyword>
<evidence type="ECO:0000255" key="1">
    <source>
        <dbReference type="HAMAP-Rule" id="MF_00184"/>
    </source>
</evidence>
<evidence type="ECO:0000255" key="2">
    <source>
        <dbReference type="PROSITE-ProRule" id="PRU01228"/>
    </source>
</evidence>
<protein>
    <recommendedName>
        <fullName evidence="1">Threonine--tRNA ligase</fullName>
        <ecNumber evidence="1">6.1.1.3</ecNumber>
    </recommendedName>
    <alternativeName>
        <fullName evidence="1">Threonyl-tRNA synthetase</fullName>
        <shortName evidence="1">ThrRS</shortName>
    </alternativeName>
</protein>
<comment type="function">
    <text evidence="1">Catalyzes the attachment of threonine to tRNA(Thr) in a two-step reaction: L-threonine is first activated by ATP to form Thr-AMP and then transferred to the acceptor end of tRNA(Thr). Also edits incorrectly charged L-seryl-tRNA(Thr).</text>
</comment>
<comment type="catalytic activity">
    <reaction evidence="1">
        <text>tRNA(Thr) + L-threonine + ATP = L-threonyl-tRNA(Thr) + AMP + diphosphate + H(+)</text>
        <dbReference type="Rhea" id="RHEA:24624"/>
        <dbReference type="Rhea" id="RHEA-COMP:9670"/>
        <dbReference type="Rhea" id="RHEA-COMP:9704"/>
        <dbReference type="ChEBI" id="CHEBI:15378"/>
        <dbReference type="ChEBI" id="CHEBI:30616"/>
        <dbReference type="ChEBI" id="CHEBI:33019"/>
        <dbReference type="ChEBI" id="CHEBI:57926"/>
        <dbReference type="ChEBI" id="CHEBI:78442"/>
        <dbReference type="ChEBI" id="CHEBI:78534"/>
        <dbReference type="ChEBI" id="CHEBI:456215"/>
        <dbReference type="EC" id="6.1.1.3"/>
    </reaction>
</comment>
<comment type="cofactor">
    <cofactor evidence="1">
        <name>Zn(2+)</name>
        <dbReference type="ChEBI" id="CHEBI:29105"/>
    </cofactor>
    <text evidence="1">Binds 1 zinc ion per subunit.</text>
</comment>
<comment type="subunit">
    <text evidence="1">Homodimer.</text>
</comment>
<comment type="subcellular location">
    <subcellularLocation>
        <location evidence="1">Cytoplasm</location>
    </subcellularLocation>
</comment>
<comment type="similarity">
    <text evidence="1">Belongs to the class-II aminoacyl-tRNA synthetase family.</text>
</comment>
<dbReference type="EC" id="6.1.1.3" evidence="1"/>
<dbReference type="EMBL" id="AE016823">
    <property type="protein sequence ID" value="AAS71030.1"/>
    <property type="molecule type" value="Genomic_DNA"/>
</dbReference>
<dbReference type="RefSeq" id="WP_000284477.1">
    <property type="nucleotide sequence ID" value="NC_005823.1"/>
</dbReference>
<dbReference type="SMR" id="Q72PK6"/>
<dbReference type="GeneID" id="61142341"/>
<dbReference type="KEGG" id="lic:LIC_12465"/>
<dbReference type="HOGENOM" id="CLU_008554_0_1_12"/>
<dbReference type="Proteomes" id="UP000007037">
    <property type="component" value="Chromosome I"/>
</dbReference>
<dbReference type="GO" id="GO:0005737">
    <property type="term" value="C:cytoplasm"/>
    <property type="evidence" value="ECO:0007669"/>
    <property type="project" value="UniProtKB-SubCell"/>
</dbReference>
<dbReference type="GO" id="GO:0005524">
    <property type="term" value="F:ATP binding"/>
    <property type="evidence" value="ECO:0007669"/>
    <property type="project" value="UniProtKB-UniRule"/>
</dbReference>
<dbReference type="GO" id="GO:0046872">
    <property type="term" value="F:metal ion binding"/>
    <property type="evidence" value="ECO:0007669"/>
    <property type="project" value="UniProtKB-KW"/>
</dbReference>
<dbReference type="GO" id="GO:0004829">
    <property type="term" value="F:threonine-tRNA ligase activity"/>
    <property type="evidence" value="ECO:0007669"/>
    <property type="project" value="UniProtKB-UniRule"/>
</dbReference>
<dbReference type="GO" id="GO:0000049">
    <property type="term" value="F:tRNA binding"/>
    <property type="evidence" value="ECO:0007669"/>
    <property type="project" value="UniProtKB-KW"/>
</dbReference>
<dbReference type="GO" id="GO:0006435">
    <property type="term" value="P:threonyl-tRNA aminoacylation"/>
    <property type="evidence" value="ECO:0007669"/>
    <property type="project" value="UniProtKB-UniRule"/>
</dbReference>
<dbReference type="CDD" id="cd01667">
    <property type="entry name" value="TGS_ThrRS"/>
    <property type="match status" value="1"/>
</dbReference>
<dbReference type="CDD" id="cd00860">
    <property type="entry name" value="ThrRS_anticodon"/>
    <property type="match status" value="1"/>
</dbReference>
<dbReference type="CDD" id="cd00771">
    <property type="entry name" value="ThrRS_core"/>
    <property type="match status" value="1"/>
</dbReference>
<dbReference type="FunFam" id="3.30.54.20:FF:000002">
    <property type="entry name" value="Threonine--tRNA ligase"/>
    <property type="match status" value="1"/>
</dbReference>
<dbReference type="FunFam" id="3.30.930.10:FF:000019">
    <property type="entry name" value="Threonine--tRNA ligase"/>
    <property type="match status" value="1"/>
</dbReference>
<dbReference type="FunFam" id="3.40.50.800:FF:000001">
    <property type="entry name" value="Threonine--tRNA ligase"/>
    <property type="match status" value="1"/>
</dbReference>
<dbReference type="FunFam" id="3.30.980.10:FF:000005">
    <property type="entry name" value="Threonyl-tRNA synthetase, mitochondrial"/>
    <property type="match status" value="1"/>
</dbReference>
<dbReference type="Gene3D" id="3.10.20.30">
    <property type="match status" value="1"/>
</dbReference>
<dbReference type="Gene3D" id="3.30.54.20">
    <property type="match status" value="1"/>
</dbReference>
<dbReference type="Gene3D" id="3.40.50.800">
    <property type="entry name" value="Anticodon-binding domain"/>
    <property type="match status" value="1"/>
</dbReference>
<dbReference type="Gene3D" id="3.30.930.10">
    <property type="entry name" value="Bira Bifunctional Protein, Domain 2"/>
    <property type="match status" value="1"/>
</dbReference>
<dbReference type="Gene3D" id="3.30.980.10">
    <property type="entry name" value="Threonyl-trna Synthetase, Chain A, domain 2"/>
    <property type="match status" value="1"/>
</dbReference>
<dbReference type="HAMAP" id="MF_00184">
    <property type="entry name" value="Thr_tRNA_synth"/>
    <property type="match status" value="1"/>
</dbReference>
<dbReference type="InterPro" id="IPR002314">
    <property type="entry name" value="aa-tRNA-synt_IIb"/>
</dbReference>
<dbReference type="InterPro" id="IPR006195">
    <property type="entry name" value="aa-tRNA-synth_II"/>
</dbReference>
<dbReference type="InterPro" id="IPR045864">
    <property type="entry name" value="aa-tRNA-synth_II/BPL/LPL"/>
</dbReference>
<dbReference type="InterPro" id="IPR004154">
    <property type="entry name" value="Anticodon-bd"/>
</dbReference>
<dbReference type="InterPro" id="IPR036621">
    <property type="entry name" value="Anticodon-bd_dom_sf"/>
</dbReference>
<dbReference type="InterPro" id="IPR012675">
    <property type="entry name" value="Beta-grasp_dom_sf"/>
</dbReference>
<dbReference type="InterPro" id="IPR004095">
    <property type="entry name" value="TGS"/>
</dbReference>
<dbReference type="InterPro" id="IPR012676">
    <property type="entry name" value="TGS-like"/>
</dbReference>
<dbReference type="InterPro" id="IPR002320">
    <property type="entry name" value="Thr-tRNA-ligase_IIa"/>
</dbReference>
<dbReference type="InterPro" id="IPR018163">
    <property type="entry name" value="Thr/Ala-tRNA-synth_IIc_edit"/>
</dbReference>
<dbReference type="InterPro" id="IPR047246">
    <property type="entry name" value="ThrRS_anticodon"/>
</dbReference>
<dbReference type="InterPro" id="IPR033728">
    <property type="entry name" value="ThrRS_core"/>
</dbReference>
<dbReference type="InterPro" id="IPR012947">
    <property type="entry name" value="tRNA_SAD"/>
</dbReference>
<dbReference type="NCBIfam" id="TIGR00418">
    <property type="entry name" value="thrS"/>
    <property type="match status" value="1"/>
</dbReference>
<dbReference type="PANTHER" id="PTHR11451:SF44">
    <property type="entry name" value="THREONINE--TRNA LIGASE, CHLOROPLASTIC_MITOCHONDRIAL 2"/>
    <property type="match status" value="1"/>
</dbReference>
<dbReference type="PANTHER" id="PTHR11451">
    <property type="entry name" value="THREONINE-TRNA LIGASE"/>
    <property type="match status" value="1"/>
</dbReference>
<dbReference type="Pfam" id="PF03129">
    <property type="entry name" value="HGTP_anticodon"/>
    <property type="match status" value="1"/>
</dbReference>
<dbReference type="Pfam" id="PF00587">
    <property type="entry name" value="tRNA-synt_2b"/>
    <property type="match status" value="1"/>
</dbReference>
<dbReference type="Pfam" id="PF07973">
    <property type="entry name" value="tRNA_SAD"/>
    <property type="match status" value="1"/>
</dbReference>
<dbReference type="PRINTS" id="PR01047">
    <property type="entry name" value="TRNASYNTHTHR"/>
</dbReference>
<dbReference type="SMART" id="SM00863">
    <property type="entry name" value="tRNA_SAD"/>
    <property type="match status" value="1"/>
</dbReference>
<dbReference type="SUPFAM" id="SSF52954">
    <property type="entry name" value="Class II aaRS ABD-related"/>
    <property type="match status" value="1"/>
</dbReference>
<dbReference type="SUPFAM" id="SSF55681">
    <property type="entry name" value="Class II aaRS and biotin synthetases"/>
    <property type="match status" value="1"/>
</dbReference>
<dbReference type="SUPFAM" id="SSF81271">
    <property type="entry name" value="TGS-like"/>
    <property type="match status" value="1"/>
</dbReference>
<dbReference type="SUPFAM" id="SSF55186">
    <property type="entry name" value="ThrRS/AlaRS common domain"/>
    <property type="match status" value="1"/>
</dbReference>
<dbReference type="PROSITE" id="PS50862">
    <property type="entry name" value="AA_TRNA_LIGASE_II"/>
    <property type="match status" value="1"/>
</dbReference>
<dbReference type="PROSITE" id="PS51880">
    <property type="entry name" value="TGS"/>
    <property type="match status" value="1"/>
</dbReference>
<reference key="1">
    <citation type="journal article" date="2004" name="J. Bacteriol.">
        <title>Comparative genomics of two Leptospira interrogans serovars reveals novel insights into physiology and pathogenesis.</title>
        <authorList>
            <person name="Nascimento A.L.T.O."/>
            <person name="Ko A.I."/>
            <person name="Martins E.A.L."/>
            <person name="Monteiro-Vitorello C.B."/>
            <person name="Ho P.L."/>
            <person name="Haake D.A."/>
            <person name="Verjovski-Almeida S."/>
            <person name="Hartskeerl R.A."/>
            <person name="Marques M.V."/>
            <person name="Oliveira M.C."/>
            <person name="Menck C.F.M."/>
            <person name="Leite L.C.C."/>
            <person name="Carrer H."/>
            <person name="Coutinho L.L."/>
            <person name="Degrave W.M."/>
            <person name="Dellagostin O.A."/>
            <person name="El-Dorry H."/>
            <person name="Ferro E.S."/>
            <person name="Ferro M.I.T."/>
            <person name="Furlan L.R."/>
            <person name="Gamberini M."/>
            <person name="Giglioti E.A."/>
            <person name="Goes-Neto A."/>
            <person name="Goldman G.H."/>
            <person name="Goldman M.H.S."/>
            <person name="Harakava R."/>
            <person name="Jeronimo S.M.B."/>
            <person name="Junqueira-de-Azevedo I.L.M."/>
            <person name="Kimura E.T."/>
            <person name="Kuramae E.E."/>
            <person name="Lemos E.G.M."/>
            <person name="Lemos M.V.F."/>
            <person name="Marino C.L."/>
            <person name="Nunes L.R."/>
            <person name="de Oliveira R.C."/>
            <person name="Pereira G.G."/>
            <person name="Reis M.S."/>
            <person name="Schriefer A."/>
            <person name="Siqueira W.J."/>
            <person name="Sommer P."/>
            <person name="Tsai S.M."/>
            <person name="Simpson A.J.G."/>
            <person name="Ferro J.A."/>
            <person name="Camargo L.E.A."/>
            <person name="Kitajima J.P."/>
            <person name="Setubal J.C."/>
            <person name="Van Sluys M.A."/>
        </authorList>
    </citation>
    <scope>NUCLEOTIDE SEQUENCE [LARGE SCALE GENOMIC DNA]</scope>
    <source>
        <strain>Fiocruz L1-130</strain>
    </source>
</reference>
<organism>
    <name type="scientific">Leptospira interrogans serogroup Icterohaemorrhagiae serovar copenhageni (strain Fiocruz L1-130)</name>
    <dbReference type="NCBI Taxonomy" id="267671"/>
    <lineage>
        <taxon>Bacteria</taxon>
        <taxon>Pseudomonadati</taxon>
        <taxon>Spirochaetota</taxon>
        <taxon>Spirochaetia</taxon>
        <taxon>Leptospirales</taxon>
        <taxon>Leptospiraceae</taxon>
        <taxon>Leptospira</taxon>
    </lineage>
</organism>
<gene>
    <name evidence="1" type="primary">thrS</name>
    <name type="ordered locus">LIC_12465</name>
</gene>
<sequence length="638" mass="73786">MYQLTLPDKSIKEVASGFTYRDFIEKELPFLKNKALAVRLNGEEILDLSRTVEKNSNIEVLTYSEKLGWETFQHSAAHLLGMAVQNLYKNANLTVGPVIDNGPGFFYYDIDFQGAIVTPEDFPKIEAEMEKIVKADHPVWRKVVSKKQAIETFQKLGEKYKIEIIDGIPSEEVSIYGMGEWFDLCRGPHVPNSGVLKSFKLTAISGAYWKADKNNSMLTRIYGVAFPTKKELDQYLFQIEEAKKRDHRKIGKEMDLFSFQKEGPGFPFWHPKGTILWNSLAEYLRSECNKRGYQEIKTPAVLSSELWKKSGHWDNFHENMYFTDIDEEDYALKPMNCPGCSLIYKHHLHSYRELPLRFAEFGSVHRHELHGVLHGLFRVRAFTQDDSHIYAPLDYLESEVMDIIDFTFTVYKKFGFSEFKTFIATRPEKSQGKDEDWEFATSTLKQSLEKKGIPYGIKEGEGAFYGPKIEFNIKDSIGRLWQCGTIQVDFSMPERFDLDYTDSDGQKKRPVMIHRAIYGSLERFIGILIEHYEGKFPLWISPNQIRILTVTEKVTDYAKNVYRELLDSGFRVELDTRNEKIGAKIRDSILKKANYLLILGEKEMESNTLAVRMRGQEDTKILTRTGFISNLQDEIKSS</sequence>
<feature type="chain" id="PRO_0000101000" description="Threonine--tRNA ligase">
    <location>
        <begin position="1"/>
        <end position="638"/>
    </location>
</feature>
<feature type="domain" description="TGS" evidence="2">
    <location>
        <begin position="1"/>
        <end position="62"/>
    </location>
</feature>
<feature type="region of interest" description="Catalytic" evidence="1">
    <location>
        <begin position="246"/>
        <end position="537"/>
    </location>
</feature>
<feature type="binding site" evidence="1">
    <location>
        <position position="337"/>
    </location>
    <ligand>
        <name>Zn(2+)</name>
        <dbReference type="ChEBI" id="CHEBI:29105"/>
    </ligand>
</feature>
<feature type="binding site" evidence="1">
    <location>
        <position position="388"/>
    </location>
    <ligand>
        <name>Zn(2+)</name>
        <dbReference type="ChEBI" id="CHEBI:29105"/>
    </ligand>
</feature>
<feature type="binding site" evidence="1">
    <location>
        <position position="514"/>
    </location>
    <ligand>
        <name>Zn(2+)</name>
        <dbReference type="ChEBI" id="CHEBI:29105"/>
    </ligand>
</feature>
<name>SYT_LEPIC</name>
<proteinExistence type="inferred from homology"/>
<accession>Q72PK6</accession>